<reference key="1">
    <citation type="journal article" date="2007" name="J. Bacteriol.">
        <title>The genome sequence of avian pathogenic Escherichia coli strain O1:K1:H7 shares strong similarities with human extraintestinal pathogenic E. coli genomes.</title>
        <authorList>
            <person name="Johnson T.J."/>
            <person name="Kariyawasam S."/>
            <person name="Wannemuehler Y."/>
            <person name="Mangiamele P."/>
            <person name="Johnson S.J."/>
            <person name="Doetkott C."/>
            <person name="Skyberg J.A."/>
            <person name="Lynne A.M."/>
            <person name="Johnson J.R."/>
            <person name="Nolan L.K."/>
        </authorList>
    </citation>
    <scope>NUCLEOTIDE SEQUENCE [LARGE SCALE GENOMIC DNA]</scope>
</reference>
<sequence>MQTSPLLTQLMEALRCLPGVGPKSAQRMAFTLLQRDRSGGMRLAQALTRAMSEIGHCADCRTFTEQEVCNICSNPRRQENGQICVVESPADIYAIEQTGQFSGRYFVLMGHLSPLDGIGPDDIGLDRLEQRLAEEKITEVILATNPTVEGEATANYIAELCAQYDVEASRIAHGVPVGGELEMVDGTTLSHSLAGRHKIRF</sequence>
<gene>
    <name evidence="1" type="primary">recR</name>
    <name type="ordered locus">Ecok1_04340</name>
    <name type="ORF">APECO1_1543</name>
</gene>
<keyword id="KW-0227">DNA damage</keyword>
<keyword id="KW-0233">DNA recombination</keyword>
<keyword id="KW-0234">DNA repair</keyword>
<keyword id="KW-0479">Metal-binding</keyword>
<keyword id="KW-1185">Reference proteome</keyword>
<keyword id="KW-0862">Zinc</keyword>
<keyword id="KW-0863">Zinc-finger</keyword>
<accession>A1A8D8</accession>
<protein>
    <recommendedName>
        <fullName evidence="1">Recombination protein RecR</fullName>
    </recommendedName>
</protein>
<evidence type="ECO:0000255" key="1">
    <source>
        <dbReference type="HAMAP-Rule" id="MF_00017"/>
    </source>
</evidence>
<name>RECR_ECOK1</name>
<feature type="chain" id="PRO_1000001536" description="Recombination protein RecR">
    <location>
        <begin position="1"/>
        <end position="201"/>
    </location>
</feature>
<feature type="domain" description="Toprim" evidence="1">
    <location>
        <begin position="81"/>
        <end position="176"/>
    </location>
</feature>
<feature type="zinc finger region" description="C4-type" evidence="1">
    <location>
        <begin position="57"/>
        <end position="72"/>
    </location>
</feature>
<dbReference type="EMBL" id="CP000468">
    <property type="protein sequence ID" value="ABI99927.1"/>
    <property type="molecule type" value="Genomic_DNA"/>
</dbReference>
<dbReference type="RefSeq" id="WP_001195025.1">
    <property type="nucleotide sequence ID" value="NZ_CADILS010000009.1"/>
</dbReference>
<dbReference type="SMR" id="A1A8D8"/>
<dbReference type="GeneID" id="93776978"/>
<dbReference type="KEGG" id="ecv:APECO1_1543"/>
<dbReference type="HOGENOM" id="CLU_060739_1_2_6"/>
<dbReference type="Proteomes" id="UP000008216">
    <property type="component" value="Chromosome"/>
</dbReference>
<dbReference type="GO" id="GO:0003677">
    <property type="term" value="F:DNA binding"/>
    <property type="evidence" value="ECO:0007669"/>
    <property type="project" value="UniProtKB-UniRule"/>
</dbReference>
<dbReference type="GO" id="GO:0008270">
    <property type="term" value="F:zinc ion binding"/>
    <property type="evidence" value="ECO:0007669"/>
    <property type="project" value="UniProtKB-KW"/>
</dbReference>
<dbReference type="GO" id="GO:0006310">
    <property type="term" value="P:DNA recombination"/>
    <property type="evidence" value="ECO:0007669"/>
    <property type="project" value="UniProtKB-UniRule"/>
</dbReference>
<dbReference type="GO" id="GO:0006281">
    <property type="term" value="P:DNA repair"/>
    <property type="evidence" value="ECO:0007669"/>
    <property type="project" value="UniProtKB-UniRule"/>
</dbReference>
<dbReference type="CDD" id="cd01025">
    <property type="entry name" value="TOPRIM_recR"/>
    <property type="match status" value="1"/>
</dbReference>
<dbReference type="FunFam" id="1.10.8.420:FF:000001">
    <property type="entry name" value="Recombination protein RecR"/>
    <property type="match status" value="1"/>
</dbReference>
<dbReference type="FunFam" id="3.40.1360.10:FF:000001">
    <property type="entry name" value="Recombination protein RecR"/>
    <property type="match status" value="1"/>
</dbReference>
<dbReference type="Gene3D" id="3.40.1360.10">
    <property type="match status" value="1"/>
</dbReference>
<dbReference type="Gene3D" id="6.10.250.240">
    <property type="match status" value="1"/>
</dbReference>
<dbReference type="Gene3D" id="1.10.8.420">
    <property type="entry name" value="RecR Domain 1"/>
    <property type="match status" value="1"/>
</dbReference>
<dbReference type="HAMAP" id="MF_00017">
    <property type="entry name" value="RecR"/>
    <property type="match status" value="1"/>
</dbReference>
<dbReference type="InterPro" id="IPR000093">
    <property type="entry name" value="DNA_Rcmb_RecR"/>
</dbReference>
<dbReference type="InterPro" id="IPR023627">
    <property type="entry name" value="Rcmb_RecR"/>
</dbReference>
<dbReference type="InterPro" id="IPR015967">
    <property type="entry name" value="Rcmb_RecR_Znf"/>
</dbReference>
<dbReference type="InterPro" id="IPR006171">
    <property type="entry name" value="TOPRIM_dom"/>
</dbReference>
<dbReference type="InterPro" id="IPR034137">
    <property type="entry name" value="TOPRIM_RecR"/>
</dbReference>
<dbReference type="NCBIfam" id="TIGR00615">
    <property type="entry name" value="recR"/>
    <property type="match status" value="1"/>
</dbReference>
<dbReference type="PANTHER" id="PTHR30446">
    <property type="entry name" value="RECOMBINATION PROTEIN RECR"/>
    <property type="match status" value="1"/>
</dbReference>
<dbReference type="PANTHER" id="PTHR30446:SF0">
    <property type="entry name" value="RECOMBINATION PROTEIN RECR"/>
    <property type="match status" value="1"/>
</dbReference>
<dbReference type="Pfam" id="PF21175">
    <property type="entry name" value="RecR_C"/>
    <property type="match status" value="1"/>
</dbReference>
<dbReference type="Pfam" id="PF21176">
    <property type="entry name" value="RecR_HhH"/>
    <property type="match status" value="1"/>
</dbReference>
<dbReference type="Pfam" id="PF02132">
    <property type="entry name" value="RecR_ZnF"/>
    <property type="match status" value="1"/>
</dbReference>
<dbReference type="Pfam" id="PF13662">
    <property type="entry name" value="Toprim_4"/>
    <property type="match status" value="1"/>
</dbReference>
<dbReference type="SMART" id="SM00493">
    <property type="entry name" value="TOPRIM"/>
    <property type="match status" value="1"/>
</dbReference>
<dbReference type="SUPFAM" id="SSF111304">
    <property type="entry name" value="Recombination protein RecR"/>
    <property type="match status" value="1"/>
</dbReference>
<dbReference type="PROSITE" id="PS01300">
    <property type="entry name" value="RECR"/>
    <property type="match status" value="1"/>
</dbReference>
<dbReference type="PROSITE" id="PS50880">
    <property type="entry name" value="TOPRIM"/>
    <property type="match status" value="1"/>
</dbReference>
<proteinExistence type="inferred from homology"/>
<comment type="function">
    <text evidence="1">May play a role in DNA repair. It seems to be involved in an RecBC-independent recombinational process of DNA repair. It may act with RecF and RecO.</text>
</comment>
<comment type="similarity">
    <text evidence="1">Belongs to the RecR family.</text>
</comment>
<organism>
    <name type="scientific">Escherichia coli O1:K1 / APEC</name>
    <dbReference type="NCBI Taxonomy" id="405955"/>
    <lineage>
        <taxon>Bacteria</taxon>
        <taxon>Pseudomonadati</taxon>
        <taxon>Pseudomonadota</taxon>
        <taxon>Gammaproteobacteria</taxon>
        <taxon>Enterobacterales</taxon>
        <taxon>Enterobacteriaceae</taxon>
        <taxon>Escherichia</taxon>
    </lineage>
</organism>